<feature type="signal peptide" evidence="1">
    <location>
        <begin position="1"/>
        <end position="23"/>
    </location>
</feature>
<feature type="chain" id="PRO_5003013608" description="RxLR effector protein PITG_14788">
    <location>
        <begin position="24"/>
        <end position="238"/>
    </location>
</feature>
<feature type="short sequence motif" description="RxLR-dEER" evidence="7">
    <location>
        <begin position="47"/>
        <end position="65"/>
    </location>
</feature>
<dbReference type="EMBL" id="DS028150">
    <property type="protein sequence ID" value="EEY62362.1"/>
    <property type="molecule type" value="Genomic_DNA"/>
</dbReference>
<dbReference type="RefSeq" id="XP_002898998.1">
    <property type="nucleotide sequence ID" value="XM_002898952.1"/>
</dbReference>
<dbReference type="SMR" id="D0NP20"/>
<dbReference type="EnsemblProtists" id="PITG_14788T0">
    <property type="protein sequence ID" value="PITG_14788T0"/>
    <property type="gene ID" value="PITG_14788"/>
</dbReference>
<dbReference type="GeneID" id="9474181"/>
<dbReference type="KEGG" id="pif:PITG_14788"/>
<dbReference type="VEuPathDB" id="FungiDB:PITG_14788"/>
<dbReference type="eggNOG" id="ENOG502STM1">
    <property type="taxonomic scope" value="Eukaryota"/>
</dbReference>
<dbReference type="HOGENOM" id="CLU_1196877_0_0_1"/>
<dbReference type="InParanoid" id="D0NP20"/>
<dbReference type="OrthoDB" id="126873at2759"/>
<dbReference type="Proteomes" id="UP000006643">
    <property type="component" value="Partially assembled WGS sequence"/>
</dbReference>
<dbReference type="GO" id="GO:0005576">
    <property type="term" value="C:extracellular region"/>
    <property type="evidence" value="ECO:0007669"/>
    <property type="project" value="UniProtKB-SubCell"/>
</dbReference>
<dbReference type="GO" id="GO:0030430">
    <property type="term" value="C:host cell cytoplasm"/>
    <property type="evidence" value="ECO:0007669"/>
    <property type="project" value="UniProtKB-SubCell"/>
</dbReference>
<dbReference type="GO" id="GO:0044196">
    <property type="term" value="C:host cell nucleolus"/>
    <property type="evidence" value="ECO:0007669"/>
    <property type="project" value="UniProtKB-SubCell"/>
</dbReference>
<dbReference type="GO" id="GO:0044163">
    <property type="term" value="C:host cytoskeleton"/>
    <property type="evidence" value="ECO:0007669"/>
    <property type="project" value="UniProtKB-SubCell"/>
</dbReference>
<reference key="1">
    <citation type="journal article" date="2009" name="Nature">
        <title>Genome sequence and analysis of the Irish potato famine pathogen Phytophthora infestans.</title>
        <authorList>
            <consortium name="The Broad Institute Genome Sequencing Platform"/>
            <person name="Haas B.J."/>
            <person name="Kamoun S."/>
            <person name="Zody M.C."/>
            <person name="Jiang R.H."/>
            <person name="Handsaker R.E."/>
            <person name="Cano L.M."/>
            <person name="Grabherr M."/>
            <person name="Kodira C.D."/>
            <person name="Raffaele S."/>
            <person name="Torto-Alalibo T."/>
            <person name="Bozkurt T.O."/>
            <person name="Ah-Fong A.M."/>
            <person name="Alvarado L."/>
            <person name="Anderson V.L."/>
            <person name="Armstrong M.R."/>
            <person name="Avrova A."/>
            <person name="Baxter L."/>
            <person name="Beynon J."/>
            <person name="Boevink P.C."/>
            <person name="Bollmann S.R."/>
            <person name="Bos J.I."/>
            <person name="Bulone V."/>
            <person name="Cai G."/>
            <person name="Cakir C."/>
            <person name="Carrington J.C."/>
            <person name="Chawner M."/>
            <person name="Conti L."/>
            <person name="Costanzo S."/>
            <person name="Ewan R."/>
            <person name="Fahlgren N."/>
            <person name="Fischbach M.A."/>
            <person name="Fugelstad J."/>
            <person name="Gilroy E.M."/>
            <person name="Gnerre S."/>
            <person name="Green P.J."/>
            <person name="Grenville-Briggs L.J."/>
            <person name="Griffith J."/>
            <person name="Grunwald N.J."/>
            <person name="Horn K."/>
            <person name="Horner N.R."/>
            <person name="Hu C.H."/>
            <person name="Huitema E."/>
            <person name="Jeong D.H."/>
            <person name="Jones A.M."/>
            <person name="Jones J.D."/>
            <person name="Jones R.W."/>
            <person name="Karlsson E.K."/>
            <person name="Kunjeti S.G."/>
            <person name="Lamour K."/>
            <person name="Liu Z."/>
            <person name="Ma L."/>
            <person name="Maclean D."/>
            <person name="Chibucos M.C."/>
            <person name="McDonald H."/>
            <person name="McWalters J."/>
            <person name="Meijer H.J."/>
            <person name="Morgan W."/>
            <person name="Morris P.F."/>
            <person name="Munro C.A."/>
            <person name="O'Neill K."/>
            <person name="Ospina-Giraldo M."/>
            <person name="Pinzon A."/>
            <person name="Pritchard L."/>
            <person name="Ramsahoye B."/>
            <person name="Ren Q."/>
            <person name="Restrepo S."/>
            <person name="Roy S."/>
            <person name="Sadanandom A."/>
            <person name="Savidor A."/>
            <person name="Schornack S."/>
            <person name="Schwartz D.C."/>
            <person name="Schumann U.D."/>
            <person name="Schwessinger B."/>
            <person name="Seyer L."/>
            <person name="Sharpe T."/>
            <person name="Silvar C."/>
            <person name="Song J."/>
            <person name="Studholme D.J."/>
            <person name="Sykes S."/>
            <person name="Thines M."/>
            <person name="van de Vondervoort P.J."/>
            <person name="Phuntumart V."/>
            <person name="Wawra S."/>
            <person name="Weide R."/>
            <person name="Win J."/>
            <person name="Young C."/>
            <person name="Zhou S."/>
            <person name="Fry W."/>
            <person name="Meyers B.C."/>
            <person name="van West P."/>
            <person name="Ristaino J."/>
            <person name="Govers F."/>
            <person name="Birch P.R."/>
            <person name="Whisson S.C."/>
            <person name="Judelson H.S."/>
            <person name="Nusbaum C."/>
        </authorList>
    </citation>
    <scope>NUCLEOTIDE SEQUENCE [LARGE SCALE GENOMIC DNA]</scope>
    <scope>INDUCTION</scope>
    <source>
        <strain>T30-4</strain>
    </source>
</reference>
<reference key="2">
    <citation type="journal article" date="2017" name="Front. Plant Sci.">
        <title>Conserved RXLR effector genes of Phytophthora infestans expressed at the early stage of potato infection are suppressive to host defense.</title>
        <authorList>
            <person name="Yin J."/>
            <person name="Gu B."/>
            <person name="Huang G."/>
            <person name="Tian Y."/>
            <person name="Quan J."/>
            <person name="Lindqvist-Kreuze H."/>
            <person name="Shan W."/>
        </authorList>
    </citation>
    <scope>INDUCTION</scope>
    <scope>DOMAIN</scope>
</reference>
<reference key="3">
    <citation type="journal article" date="2019" name="J. Exp. Bot.">
        <title>Phytophthora infestans RXLR effectors act in concert at diverse subcellular locations to enhance host colonization.</title>
        <authorList>
            <person name="Wang S."/>
            <person name="McLellan H."/>
            <person name="Bukharova T."/>
            <person name="He Q."/>
            <person name="Murphy F."/>
            <person name="Shi J."/>
            <person name="Sun S."/>
            <person name="van Weymers P."/>
            <person name="Ren Y."/>
            <person name="Thilliez G."/>
            <person name="Wang H."/>
            <person name="Chen X."/>
            <person name="Engelhardt S."/>
            <person name="Vleeshouwers V."/>
            <person name="Gilroy E.M."/>
            <person name="Whisson S.C."/>
            <person name="Hein I."/>
            <person name="Wang X."/>
            <person name="Tian Z."/>
            <person name="Birch P.R.J."/>
            <person name="Boevink P.C."/>
        </authorList>
    </citation>
    <scope>FUNCTION</scope>
    <scope>SUBCELLULAR LOCATION</scope>
</reference>
<name>RXLRP_PHYIT</name>
<proteinExistence type="evidence at transcript level"/>
<organism>
    <name type="scientific">Phytophthora infestans (strain T30-4)</name>
    <name type="common">Potato late blight agent</name>
    <dbReference type="NCBI Taxonomy" id="403677"/>
    <lineage>
        <taxon>Eukaryota</taxon>
        <taxon>Sar</taxon>
        <taxon>Stramenopiles</taxon>
        <taxon>Oomycota</taxon>
        <taxon>Peronosporales</taxon>
        <taxon>Peronosporaceae</taxon>
        <taxon>Phytophthora</taxon>
    </lineage>
</organism>
<protein>
    <recommendedName>
        <fullName evidence="5">RxLR effector protein PITG_14788</fullName>
    </recommendedName>
</protein>
<sequence>MKSLHAVNLVLLLLLACFAPAPATRELNLRAAASDSTRVVDNATTERLLRAHSSGKEEQKEEEERAISINFPSLEKILKNVTSGKSTELQGMLKADEALGSAFKTLKLSTMRIGKDDTKMVAKFLSSRNFKIWFQHAVKINKDDPYGEMLKALTNVFGEKNVAMMILVGNLSRNSRDVAKKLEKAQFYKWYFVDKYKTADEVFTNVLKADRNRIHGYGREKEIWGDYAKYVTTTVMKY</sequence>
<gene>
    <name type="ORF">PITG_14788</name>
</gene>
<comment type="function">
    <text evidence="4">Effector that enhances P.infestans colonization of Nicotiana benthamiana leaves.</text>
</comment>
<comment type="subcellular location">
    <subcellularLocation>
        <location evidence="4">Secreted</location>
    </subcellularLocation>
    <subcellularLocation>
        <location>Host cytoplasm</location>
        <location>Host cytoskeleton</location>
    </subcellularLocation>
    <subcellularLocation>
        <location evidence="4">Host nucleus</location>
        <location evidence="4">Host nucleolus</location>
    </subcellularLocation>
    <subcellularLocation>
        <location evidence="4">Host cytoplasm</location>
    </subcellularLocation>
    <text evidence="4">Associates with host microtubules.</text>
</comment>
<comment type="induction">
    <text evidence="2 3">Expression is induced during host plant infection.</text>
</comment>
<comment type="domain">
    <text evidence="7">The RxLR-dEER motif acts to carry the protein into the host cell cytoplasm through binding to cell surface phosphatidylinositol-3-phosphate.</text>
</comment>
<comment type="similarity">
    <text evidence="6">Belongs to the RxLR effector family.</text>
</comment>
<accession>D0NP20</accession>
<keyword id="KW-1035">Host cytoplasm</keyword>
<keyword id="KW-1037">Host cytoskeleton</keyword>
<keyword id="KW-1048">Host nucleus</keyword>
<keyword id="KW-1185">Reference proteome</keyword>
<keyword id="KW-0964">Secreted</keyword>
<keyword id="KW-0732">Signal</keyword>
<keyword id="KW-0843">Virulence</keyword>
<evidence type="ECO:0000255" key="1"/>
<evidence type="ECO:0000269" key="2">
    <source>
    </source>
</evidence>
<evidence type="ECO:0000269" key="3">
    <source>
    </source>
</evidence>
<evidence type="ECO:0000269" key="4">
    <source>
    </source>
</evidence>
<evidence type="ECO:0000303" key="5">
    <source>
    </source>
</evidence>
<evidence type="ECO:0000305" key="6"/>
<evidence type="ECO:0000305" key="7">
    <source>
    </source>
</evidence>